<evidence type="ECO:0000255" key="1">
    <source>
        <dbReference type="HAMAP-Rule" id="MF_00109"/>
    </source>
</evidence>
<name>AROK_THEVB</name>
<reference key="1">
    <citation type="journal article" date="2002" name="DNA Res.">
        <title>Complete genome structure of the thermophilic cyanobacterium Thermosynechococcus elongatus BP-1.</title>
        <authorList>
            <person name="Nakamura Y."/>
            <person name="Kaneko T."/>
            <person name="Sato S."/>
            <person name="Ikeuchi M."/>
            <person name="Katoh H."/>
            <person name="Sasamoto S."/>
            <person name="Watanabe A."/>
            <person name="Iriguchi M."/>
            <person name="Kawashima K."/>
            <person name="Kimura T."/>
            <person name="Kishida Y."/>
            <person name="Kiyokawa C."/>
            <person name="Kohara M."/>
            <person name="Matsumoto M."/>
            <person name="Matsuno A."/>
            <person name="Nakazaki N."/>
            <person name="Shimpo S."/>
            <person name="Sugimoto M."/>
            <person name="Takeuchi C."/>
            <person name="Yamada M."/>
            <person name="Tabata S."/>
        </authorList>
    </citation>
    <scope>NUCLEOTIDE SEQUENCE [LARGE SCALE GENOMIC DNA]</scope>
    <source>
        <strain>NIES-2133 / IAM M-273 / BP-1</strain>
    </source>
</reference>
<keyword id="KW-0028">Amino-acid biosynthesis</keyword>
<keyword id="KW-0057">Aromatic amino acid biosynthesis</keyword>
<keyword id="KW-0067">ATP-binding</keyword>
<keyword id="KW-0963">Cytoplasm</keyword>
<keyword id="KW-0418">Kinase</keyword>
<keyword id="KW-0460">Magnesium</keyword>
<keyword id="KW-0479">Metal-binding</keyword>
<keyword id="KW-0547">Nucleotide-binding</keyword>
<keyword id="KW-1185">Reference proteome</keyword>
<keyword id="KW-0808">Transferase</keyword>
<feature type="chain" id="PRO_0000192420" description="Shikimate kinase">
    <location>
        <begin position="1"/>
        <end position="183"/>
    </location>
</feature>
<feature type="binding site" evidence="1">
    <location>
        <begin position="19"/>
        <end position="24"/>
    </location>
    <ligand>
        <name>ATP</name>
        <dbReference type="ChEBI" id="CHEBI:30616"/>
    </ligand>
</feature>
<feature type="binding site" evidence="1">
    <location>
        <position position="23"/>
    </location>
    <ligand>
        <name>Mg(2+)</name>
        <dbReference type="ChEBI" id="CHEBI:18420"/>
    </ligand>
</feature>
<feature type="binding site" evidence="1">
    <location>
        <position position="41"/>
    </location>
    <ligand>
        <name>substrate</name>
    </ligand>
</feature>
<feature type="binding site" evidence="1">
    <location>
        <position position="65"/>
    </location>
    <ligand>
        <name>substrate</name>
    </ligand>
</feature>
<feature type="binding site" evidence="1">
    <location>
        <position position="87"/>
    </location>
    <ligand>
        <name>substrate</name>
    </ligand>
</feature>
<feature type="binding site" evidence="1">
    <location>
        <position position="124"/>
    </location>
    <ligand>
        <name>ATP</name>
        <dbReference type="ChEBI" id="CHEBI:30616"/>
    </ligand>
</feature>
<feature type="binding site" evidence="1">
    <location>
        <position position="143"/>
    </location>
    <ligand>
        <name>substrate</name>
    </ligand>
</feature>
<proteinExistence type="inferred from homology"/>
<accession>Q8DKH7</accession>
<comment type="function">
    <text evidence="1">Catalyzes the specific phosphorylation of the 3-hydroxyl group of shikimic acid using ATP as a cosubstrate.</text>
</comment>
<comment type="catalytic activity">
    <reaction evidence="1">
        <text>shikimate + ATP = 3-phosphoshikimate + ADP + H(+)</text>
        <dbReference type="Rhea" id="RHEA:13121"/>
        <dbReference type="ChEBI" id="CHEBI:15378"/>
        <dbReference type="ChEBI" id="CHEBI:30616"/>
        <dbReference type="ChEBI" id="CHEBI:36208"/>
        <dbReference type="ChEBI" id="CHEBI:145989"/>
        <dbReference type="ChEBI" id="CHEBI:456216"/>
        <dbReference type="EC" id="2.7.1.71"/>
    </reaction>
</comment>
<comment type="cofactor">
    <cofactor evidence="1">
        <name>Mg(2+)</name>
        <dbReference type="ChEBI" id="CHEBI:18420"/>
    </cofactor>
    <text evidence="1">Binds 1 Mg(2+) ion per subunit.</text>
</comment>
<comment type="pathway">
    <text evidence="1">Metabolic intermediate biosynthesis; chorismate biosynthesis; chorismate from D-erythrose 4-phosphate and phosphoenolpyruvate: step 5/7.</text>
</comment>
<comment type="subunit">
    <text evidence="1">Monomer.</text>
</comment>
<comment type="subcellular location">
    <subcellularLocation>
        <location evidence="1">Cytoplasm</location>
    </subcellularLocation>
</comment>
<comment type="similarity">
    <text evidence="1">Belongs to the shikimate kinase family.</text>
</comment>
<sequence length="183" mass="20778">MKLQERLGGANIYLVGMMGAGKTTTGRLLAQRLGYSFVDTDAVITAFRQRPIREIFAQEGEPAFRELEQQVLAQVSSYHHLVVATGGGIVLNPMNWSYLHHGIVVWLHVPLAVLCQRLRQDRERPLLQEQPLEERLGELLQARQHLYAQADLELRITLEDTPETVCDRLLETLPCILKPMEPC</sequence>
<organism>
    <name type="scientific">Thermosynechococcus vestitus (strain NIES-2133 / IAM M-273 / BP-1)</name>
    <dbReference type="NCBI Taxonomy" id="197221"/>
    <lineage>
        <taxon>Bacteria</taxon>
        <taxon>Bacillati</taxon>
        <taxon>Cyanobacteriota</taxon>
        <taxon>Cyanophyceae</taxon>
        <taxon>Acaryochloridales</taxon>
        <taxon>Thermosynechococcaceae</taxon>
        <taxon>Thermosynechococcus</taxon>
    </lineage>
</organism>
<dbReference type="EC" id="2.7.1.71" evidence="1"/>
<dbReference type="EMBL" id="BA000039">
    <property type="protein sequence ID" value="BAC08434.1"/>
    <property type="molecule type" value="Genomic_DNA"/>
</dbReference>
<dbReference type="RefSeq" id="NP_681672.1">
    <property type="nucleotide sequence ID" value="NC_004113.1"/>
</dbReference>
<dbReference type="RefSeq" id="WP_011056726.1">
    <property type="nucleotide sequence ID" value="NC_004113.1"/>
</dbReference>
<dbReference type="SMR" id="Q8DKH7"/>
<dbReference type="STRING" id="197221.gene:10747474"/>
<dbReference type="EnsemblBacteria" id="BAC08434">
    <property type="protein sequence ID" value="BAC08434"/>
    <property type="gene ID" value="BAC08434"/>
</dbReference>
<dbReference type="KEGG" id="tel:tlr0882"/>
<dbReference type="PATRIC" id="fig|197221.4.peg.928"/>
<dbReference type="eggNOG" id="COG0703">
    <property type="taxonomic scope" value="Bacteria"/>
</dbReference>
<dbReference type="UniPathway" id="UPA00053">
    <property type="reaction ID" value="UER00088"/>
</dbReference>
<dbReference type="Proteomes" id="UP000000440">
    <property type="component" value="Chromosome"/>
</dbReference>
<dbReference type="GO" id="GO:0005829">
    <property type="term" value="C:cytosol"/>
    <property type="evidence" value="ECO:0007669"/>
    <property type="project" value="TreeGrafter"/>
</dbReference>
<dbReference type="GO" id="GO:0005524">
    <property type="term" value="F:ATP binding"/>
    <property type="evidence" value="ECO:0007669"/>
    <property type="project" value="UniProtKB-UniRule"/>
</dbReference>
<dbReference type="GO" id="GO:0000287">
    <property type="term" value="F:magnesium ion binding"/>
    <property type="evidence" value="ECO:0007669"/>
    <property type="project" value="UniProtKB-UniRule"/>
</dbReference>
<dbReference type="GO" id="GO:0004765">
    <property type="term" value="F:shikimate kinase activity"/>
    <property type="evidence" value="ECO:0007669"/>
    <property type="project" value="UniProtKB-UniRule"/>
</dbReference>
<dbReference type="GO" id="GO:0008652">
    <property type="term" value="P:amino acid biosynthetic process"/>
    <property type="evidence" value="ECO:0007669"/>
    <property type="project" value="UniProtKB-KW"/>
</dbReference>
<dbReference type="GO" id="GO:0009073">
    <property type="term" value="P:aromatic amino acid family biosynthetic process"/>
    <property type="evidence" value="ECO:0007669"/>
    <property type="project" value="UniProtKB-KW"/>
</dbReference>
<dbReference type="GO" id="GO:0009423">
    <property type="term" value="P:chorismate biosynthetic process"/>
    <property type="evidence" value="ECO:0007669"/>
    <property type="project" value="UniProtKB-UniRule"/>
</dbReference>
<dbReference type="CDD" id="cd00464">
    <property type="entry name" value="SK"/>
    <property type="match status" value="1"/>
</dbReference>
<dbReference type="Gene3D" id="3.40.50.300">
    <property type="entry name" value="P-loop containing nucleotide triphosphate hydrolases"/>
    <property type="match status" value="1"/>
</dbReference>
<dbReference type="HAMAP" id="MF_00109">
    <property type="entry name" value="Shikimate_kinase"/>
    <property type="match status" value="1"/>
</dbReference>
<dbReference type="InterPro" id="IPR027417">
    <property type="entry name" value="P-loop_NTPase"/>
</dbReference>
<dbReference type="InterPro" id="IPR031322">
    <property type="entry name" value="Shikimate/glucono_kinase"/>
</dbReference>
<dbReference type="InterPro" id="IPR000623">
    <property type="entry name" value="Shikimate_kinase/TSH1"/>
</dbReference>
<dbReference type="InterPro" id="IPR023000">
    <property type="entry name" value="Shikimate_kinase_CS"/>
</dbReference>
<dbReference type="PANTHER" id="PTHR21087">
    <property type="entry name" value="SHIKIMATE KINASE"/>
    <property type="match status" value="1"/>
</dbReference>
<dbReference type="PANTHER" id="PTHR21087:SF16">
    <property type="entry name" value="SHIKIMATE KINASE 1, CHLOROPLASTIC"/>
    <property type="match status" value="1"/>
</dbReference>
<dbReference type="Pfam" id="PF01202">
    <property type="entry name" value="SKI"/>
    <property type="match status" value="1"/>
</dbReference>
<dbReference type="PRINTS" id="PR01100">
    <property type="entry name" value="SHIKIMTKNASE"/>
</dbReference>
<dbReference type="SUPFAM" id="SSF52540">
    <property type="entry name" value="P-loop containing nucleoside triphosphate hydrolases"/>
    <property type="match status" value="1"/>
</dbReference>
<dbReference type="PROSITE" id="PS01128">
    <property type="entry name" value="SHIKIMATE_KINASE"/>
    <property type="match status" value="1"/>
</dbReference>
<gene>
    <name evidence="1" type="primary">aroK</name>
    <name type="ordered locus">tlr0882</name>
</gene>
<protein>
    <recommendedName>
        <fullName evidence="1">Shikimate kinase</fullName>
        <shortName evidence="1">SK</shortName>
        <ecNumber evidence="1">2.7.1.71</ecNumber>
    </recommendedName>
</protein>